<gene>
    <name evidence="1" type="primary">rimM</name>
    <name type="ordered locus">Tfu_0664</name>
</gene>
<sequence length="170" mass="18625">MRLVVGRIGRPHGVKGEVTVEVRTDSPEERFVVGKALETDPADVGPLTITAQRWHKDRLLVRFEEVPDRTAAEQLRGVFLVVDSAELPPLDDPDEFHDHELIGLRVETVDGEAVGEVVDVLHHAQDMLVVSGEKGSEVLVPFVRELVPDVDTAAGRVVIDPPPGLLELGR</sequence>
<protein>
    <recommendedName>
        <fullName evidence="1">Ribosome maturation factor RimM</fullName>
    </recommendedName>
</protein>
<name>RIMM_THEFY</name>
<accession>Q47S65</accession>
<organism>
    <name type="scientific">Thermobifida fusca (strain YX)</name>
    <dbReference type="NCBI Taxonomy" id="269800"/>
    <lineage>
        <taxon>Bacteria</taxon>
        <taxon>Bacillati</taxon>
        <taxon>Actinomycetota</taxon>
        <taxon>Actinomycetes</taxon>
        <taxon>Streptosporangiales</taxon>
        <taxon>Nocardiopsidaceae</taxon>
        <taxon>Thermobifida</taxon>
    </lineage>
</organism>
<proteinExistence type="inferred from homology"/>
<keyword id="KW-0143">Chaperone</keyword>
<keyword id="KW-0963">Cytoplasm</keyword>
<keyword id="KW-0690">Ribosome biogenesis</keyword>
<keyword id="KW-0698">rRNA processing</keyword>
<reference key="1">
    <citation type="journal article" date="2007" name="J. Bacteriol.">
        <title>Genome sequence and analysis of the soil cellulolytic actinomycete Thermobifida fusca YX.</title>
        <authorList>
            <person name="Lykidis A."/>
            <person name="Mavromatis K."/>
            <person name="Ivanova N."/>
            <person name="Anderson I."/>
            <person name="Land M."/>
            <person name="DiBartolo G."/>
            <person name="Martinez M."/>
            <person name="Lapidus A."/>
            <person name="Lucas S."/>
            <person name="Copeland A."/>
            <person name="Richardson P."/>
            <person name="Wilson D.B."/>
            <person name="Kyrpides N."/>
        </authorList>
    </citation>
    <scope>NUCLEOTIDE SEQUENCE [LARGE SCALE GENOMIC DNA]</scope>
    <source>
        <strain>YX</strain>
    </source>
</reference>
<comment type="function">
    <text evidence="1">An accessory protein needed during the final step in the assembly of 30S ribosomal subunit, possibly for assembly of the head region. Essential for efficient processing of 16S rRNA. May be needed both before and after RbfA during the maturation of 16S rRNA. It has affinity for free ribosomal 30S subunits but not for 70S ribosomes.</text>
</comment>
<comment type="subunit">
    <text evidence="1">Binds ribosomal protein uS19.</text>
</comment>
<comment type="subcellular location">
    <subcellularLocation>
        <location evidence="1">Cytoplasm</location>
    </subcellularLocation>
</comment>
<comment type="domain">
    <text evidence="1">The PRC barrel domain binds ribosomal protein uS19.</text>
</comment>
<comment type="similarity">
    <text evidence="1">Belongs to the RimM family.</text>
</comment>
<feature type="chain" id="PRO_0000244182" description="Ribosome maturation factor RimM">
    <location>
        <begin position="1"/>
        <end position="170"/>
    </location>
</feature>
<feature type="domain" description="PRC barrel" evidence="1">
    <location>
        <begin position="93"/>
        <end position="165"/>
    </location>
</feature>
<dbReference type="EMBL" id="CP000088">
    <property type="protein sequence ID" value="AAZ54702.1"/>
    <property type="molecule type" value="Genomic_DNA"/>
</dbReference>
<dbReference type="RefSeq" id="WP_011291111.1">
    <property type="nucleotide sequence ID" value="NC_007333.1"/>
</dbReference>
<dbReference type="SMR" id="Q47S65"/>
<dbReference type="STRING" id="269800.Tfu_0664"/>
<dbReference type="KEGG" id="tfu:Tfu_0664"/>
<dbReference type="eggNOG" id="COG0806">
    <property type="taxonomic scope" value="Bacteria"/>
</dbReference>
<dbReference type="HOGENOM" id="CLU_077636_0_0_11"/>
<dbReference type="OrthoDB" id="5381335at2"/>
<dbReference type="GO" id="GO:0005737">
    <property type="term" value="C:cytoplasm"/>
    <property type="evidence" value="ECO:0007669"/>
    <property type="project" value="UniProtKB-SubCell"/>
</dbReference>
<dbReference type="GO" id="GO:0005840">
    <property type="term" value="C:ribosome"/>
    <property type="evidence" value="ECO:0007669"/>
    <property type="project" value="InterPro"/>
</dbReference>
<dbReference type="GO" id="GO:0043022">
    <property type="term" value="F:ribosome binding"/>
    <property type="evidence" value="ECO:0007669"/>
    <property type="project" value="InterPro"/>
</dbReference>
<dbReference type="GO" id="GO:0042274">
    <property type="term" value="P:ribosomal small subunit biogenesis"/>
    <property type="evidence" value="ECO:0007669"/>
    <property type="project" value="UniProtKB-UniRule"/>
</dbReference>
<dbReference type="GO" id="GO:0006364">
    <property type="term" value="P:rRNA processing"/>
    <property type="evidence" value="ECO:0007669"/>
    <property type="project" value="UniProtKB-UniRule"/>
</dbReference>
<dbReference type="Gene3D" id="2.30.30.240">
    <property type="entry name" value="PRC-barrel domain"/>
    <property type="match status" value="1"/>
</dbReference>
<dbReference type="Gene3D" id="2.40.30.60">
    <property type="entry name" value="RimM"/>
    <property type="match status" value="1"/>
</dbReference>
<dbReference type="HAMAP" id="MF_00014">
    <property type="entry name" value="Ribosome_mat_RimM"/>
    <property type="match status" value="1"/>
</dbReference>
<dbReference type="InterPro" id="IPR011033">
    <property type="entry name" value="PRC_barrel-like_sf"/>
</dbReference>
<dbReference type="InterPro" id="IPR056792">
    <property type="entry name" value="PRC_RimM"/>
</dbReference>
<dbReference type="InterPro" id="IPR011961">
    <property type="entry name" value="RimM"/>
</dbReference>
<dbReference type="InterPro" id="IPR002676">
    <property type="entry name" value="RimM_N"/>
</dbReference>
<dbReference type="InterPro" id="IPR036976">
    <property type="entry name" value="RimM_N_sf"/>
</dbReference>
<dbReference type="InterPro" id="IPR009000">
    <property type="entry name" value="Transl_B-barrel_sf"/>
</dbReference>
<dbReference type="NCBIfam" id="TIGR02273">
    <property type="entry name" value="16S_RimM"/>
    <property type="match status" value="1"/>
</dbReference>
<dbReference type="PANTHER" id="PTHR33692">
    <property type="entry name" value="RIBOSOME MATURATION FACTOR RIMM"/>
    <property type="match status" value="1"/>
</dbReference>
<dbReference type="PANTHER" id="PTHR33692:SF1">
    <property type="entry name" value="RIBOSOME MATURATION FACTOR RIMM"/>
    <property type="match status" value="1"/>
</dbReference>
<dbReference type="Pfam" id="PF24986">
    <property type="entry name" value="PRC_RimM"/>
    <property type="match status" value="1"/>
</dbReference>
<dbReference type="Pfam" id="PF01782">
    <property type="entry name" value="RimM"/>
    <property type="match status" value="1"/>
</dbReference>
<dbReference type="SUPFAM" id="SSF50346">
    <property type="entry name" value="PRC-barrel domain"/>
    <property type="match status" value="1"/>
</dbReference>
<dbReference type="SUPFAM" id="SSF50447">
    <property type="entry name" value="Translation proteins"/>
    <property type="match status" value="1"/>
</dbReference>
<evidence type="ECO:0000255" key="1">
    <source>
        <dbReference type="HAMAP-Rule" id="MF_00014"/>
    </source>
</evidence>